<organism>
    <name type="scientific">Sus scrofa</name>
    <name type="common">Pig</name>
    <dbReference type="NCBI Taxonomy" id="9823"/>
    <lineage>
        <taxon>Eukaryota</taxon>
        <taxon>Metazoa</taxon>
        <taxon>Chordata</taxon>
        <taxon>Craniata</taxon>
        <taxon>Vertebrata</taxon>
        <taxon>Euteleostomi</taxon>
        <taxon>Mammalia</taxon>
        <taxon>Eutheria</taxon>
        <taxon>Laurasiatheria</taxon>
        <taxon>Artiodactyla</taxon>
        <taxon>Suina</taxon>
        <taxon>Suidae</taxon>
        <taxon>Sus</taxon>
    </lineage>
</organism>
<gene>
    <name type="primary">NEFL</name>
</gene>
<protein>
    <recommendedName>
        <fullName>Neurofilament light polypeptide</fullName>
        <shortName>NF-L</shortName>
    </recommendedName>
    <alternativeName>
        <fullName>68 kDa neurofilament protein</fullName>
    </alternativeName>
    <alternativeName>
        <fullName>Neurofilament triplet L protein</fullName>
    </alternativeName>
</protein>
<keyword id="KW-0007">Acetylation</keyword>
<keyword id="KW-0966">Cell projection</keyword>
<keyword id="KW-0175">Coiled coil</keyword>
<keyword id="KW-0963">Cytoplasm</keyword>
<keyword id="KW-0206">Cytoskeleton</keyword>
<keyword id="KW-0903">Direct protein sequencing</keyword>
<keyword id="KW-0325">Glycoprotein</keyword>
<keyword id="KW-0403">Intermediate filament</keyword>
<keyword id="KW-0488">Methylation</keyword>
<keyword id="KW-0597">Phosphoprotein</keyword>
<keyword id="KW-1185">Reference proteome</keyword>
<keyword id="KW-0832">Ubl conjugation</keyword>
<accession>P02547</accession>
<reference key="1">
    <citation type="journal article" date="1985" name="FEBS Lett.">
        <title>The complete amino acid sequence of the major mammalian neurofilament protein (NF-L).</title>
        <authorList>
            <person name="Geisler N."/>
            <person name="Plessmann U."/>
            <person name="Weber K."/>
        </authorList>
    </citation>
    <scope>PROTEIN SEQUENCE OF 2-549</scope>
</reference>
<reference key="2">
    <citation type="journal article" date="1983" name="EMBO J.">
        <title>Neurofilament architecture combines structural principles of intermediate filaments with carboxy-terminal extensions increasing in size between triplet proteins.</title>
        <authorList>
            <person name="Geisler N."/>
            <person name="Kaufmann E."/>
            <person name="Fischer S."/>
            <person name="Plessmann U."/>
            <person name="Weber K."/>
        </authorList>
    </citation>
    <scope>PROTEIN SEQUENCE OF 2-83 AND 279-549</scope>
</reference>
<evidence type="ECO:0000250" key="1"/>
<evidence type="ECO:0000250" key="2">
    <source>
        <dbReference type="UniProtKB" id="P02548"/>
    </source>
</evidence>
<evidence type="ECO:0000250" key="3">
    <source>
        <dbReference type="UniProtKB" id="P08551"/>
    </source>
</evidence>
<evidence type="ECO:0000250" key="4">
    <source>
        <dbReference type="UniProtKB" id="P19527"/>
    </source>
</evidence>
<evidence type="ECO:0000255" key="5">
    <source>
        <dbReference type="PROSITE-ProRule" id="PRU01188"/>
    </source>
</evidence>
<evidence type="ECO:0000256" key="6">
    <source>
        <dbReference type="SAM" id="MobiDB-lite"/>
    </source>
</evidence>
<evidence type="ECO:0000269" key="7">
    <source>
    </source>
</evidence>
<evidence type="ECO:0000269" key="8">
    <source>
    </source>
</evidence>
<proteinExistence type="evidence at protein level"/>
<sequence>MSSFYSEPYYSTSYKRRYVETPRVHISSVRSGYSTARSAYSSYSAPVSSSLSVRRSYSSSSGLMPSLENLDLSQVAAISNDLKSIRTQEKAQLQDLNDRFASFIERVHELEQQNKVLEAQLLVLRQKHSEPSRFRALYEQEIRDLRLAAEDATNEKQALQGEREGLEETLRNLQARYEEEVLSREDAEGRLMEARKGADEAALARAELEKRIDSLMDEIAFLKKVHEEEIAELQAQIQYAQISVEMDVSSKPDLSAALKDIRAQYEKLAAKNMQNAEEWFKSRFTVLTESAAKNTDAVRAAKDEVSESRRLLKAKTLEIEACRGMNEALEKQLQELEDKQNADISAMQDTINKLENELRTTKSEMARYLKEYQDLLNVKMALDIEIAAYRKLLEGEETRLSFTSVGSLTTGYSQSSQVFGRSAYGGLQTSSYLMSTRSFPSYYTSHVQEEQIEVEETIEAAKAEEAKDEPPSEGEAEEEGKEKEEAEAEAEAEEEGAQEEEEAAEKEESEEAKEEEGGEGEQGEETKEAEEEEKKDEGAGEEQATKKKD</sequence>
<feature type="initiator methionine" description="Removed" evidence="2 7 8">
    <location>
        <position position="1"/>
    </location>
</feature>
<feature type="chain" id="PRO_0000063789" description="Neurofilament light polypeptide">
    <location>
        <begin position="2"/>
        <end position="549"/>
    </location>
</feature>
<feature type="domain" description="IF rod" evidence="5">
    <location>
        <begin position="89"/>
        <end position="400"/>
    </location>
</feature>
<feature type="region of interest" description="Head">
    <location>
        <begin position="2"/>
        <end position="92"/>
    </location>
</feature>
<feature type="region of interest" description="Coil 1A">
    <location>
        <begin position="93"/>
        <end position="124"/>
    </location>
</feature>
<feature type="region of interest" description="Linker 1">
    <location>
        <begin position="125"/>
        <end position="137"/>
    </location>
</feature>
<feature type="region of interest" description="Coil 1B">
    <location>
        <begin position="138"/>
        <end position="233"/>
    </location>
</feature>
<feature type="region of interest" description="Linker 12">
    <location>
        <begin position="234"/>
        <end position="252"/>
    </location>
</feature>
<feature type="region of interest" description="Coil 2A">
    <location>
        <begin position="253"/>
        <end position="271"/>
    </location>
</feature>
<feature type="region of interest" description="Linker 2">
    <location>
        <begin position="272"/>
        <end position="280"/>
    </location>
</feature>
<feature type="region of interest" description="Coil 2B">
    <location>
        <begin position="281"/>
        <end position="396"/>
    </location>
</feature>
<feature type="region of interest" description="Epitope; recognized by IF-specific monoclonal antibody">
    <location>
        <begin position="381"/>
        <end position="391"/>
    </location>
</feature>
<feature type="region of interest" description="Tail">
    <location>
        <begin position="397"/>
        <end position="549"/>
    </location>
</feature>
<feature type="region of interest" description="Tail, subdomain A">
    <location>
        <begin position="397"/>
        <end position="443"/>
    </location>
</feature>
<feature type="region of interest" description="Tail, subdomain B (acidic)">
    <location>
        <begin position="444"/>
        <end position="549"/>
    </location>
</feature>
<feature type="region of interest" description="Disordered" evidence="6">
    <location>
        <begin position="462"/>
        <end position="549"/>
    </location>
</feature>
<feature type="compositionally biased region" description="Acidic residues" evidence="6">
    <location>
        <begin position="471"/>
        <end position="534"/>
    </location>
</feature>
<feature type="compositionally biased region" description="Basic and acidic residues" evidence="6">
    <location>
        <begin position="535"/>
        <end position="549"/>
    </location>
</feature>
<feature type="modified residue" description="N-acetylserine" evidence="2">
    <location>
        <position position="2"/>
    </location>
</feature>
<feature type="modified residue" description="Asymmetric dimethylarginine; alternate" evidence="3">
    <location>
        <position position="23"/>
    </location>
</feature>
<feature type="modified residue" description="Omega-N-methylarginine; alternate" evidence="3">
    <location>
        <position position="23"/>
    </location>
</feature>
<feature type="modified residue" description="Omega-N-methylarginine" evidence="3">
    <location>
        <position position="30"/>
    </location>
</feature>
<feature type="modified residue" description="Phosphotyrosine" evidence="3">
    <location>
        <position position="43"/>
    </location>
</feature>
<feature type="modified residue" description="Phosphoserine" evidence="2">
    <location>
        <position position="56"/>
    </location>
</feature>
<feature type="modified residue" description="Phosphoserine" evidence="2">
    <location>
        <position position="66"/>
    </location>
</feature>
<feature type="modified residue" description="Phosphoserine" evidence="4">
    <location>
        <position position="102"/>
    </location>
</feature>
<feature type="modified residue" description="Phosphoserine" evidence="2">
    <location>
        <position position="472"/>
    </location>
</feature>
<feature type="modified residue" description="Phosphothreonine" evidence="4">
    <location>
        <position position="526"/>
    </location>
</feature>
<feature type="glycosylation site" description="O-linked (GlcNAc) threonine" evidence="1">
    <location>
        <position position="21"/>
    </location>
</feature>
<feature type="glycosylation site" description="O-linked (GlcNAc) serine" evidence="1">
    <location>
        <position position="27"/>
    </location>
</feature>
<feature type="unsure residue" description="R or K">
    <location>
        <position position="323"/>
    </location>
</feature>
<comment type="function">
    <text evidence="3">Neurofilaments usually contain three intermediate filament proteins: NEFL, NEFM, and NEFH which are involved in the maintenance of neuronal caliber. May additionally cooperate with the neuronal intermediate filament proteins PRPH and INA to form neuronal filamentous networks (By similarity).</text>
</comment>
<comment type="subunit">
    <text evidence="1 4">Forms homodimers (in vitro) (By similarity). Forms heterodimers with NEFH or NEFM; which can further hetero-oligomerize (in vitro) (By similarity). Forms heterodimers with INA (in vitro) (By similarity). Interacts with ARHGEF28. Interacts with TRIM2.</text>
</comment>
<comment type="subcellular location">
    <subcellularLocation>
        <location evidence="3">Cell projection</location>
        <location evidence="3">Axon</location>
    </subcellularLocation>
    <subcellularLocation>
        <location evidence="3">Cytoplasm</location>
        <location evidence="3">Cytoskeleton</location>
    </subcellularLocation>
</comment>
<comment type="domain">
    <text>The extra mass and high charge density that distinguish the neurofilament proteins from all other intermediate filament proteins are due to the tailpiece extensions. This region may form a charged scaffolding structure suitable for interaction with other neuronal components or ions.</text>
</comment>
<comment type="PTM">
    <text evidence="1">O-glycosylated.</text>
</comment>
<comment type="PTM">
    <text evidence="1">Phosphorylated in the head and rod regions by the PKC kinase PKN1, leading to the inhibition of polymerization.</text>
</comment>
<comment type="PTM">
    <text evidence="1">Ubiquitinated in the presence of TRIM2 and UBE2D1.</text>
</comment>
<comment type="miscellaneous">
    <text>NF-L is the most abundant of the three neurofilament proteins and, like the other nonepithelial intermediate filament proteins, it can form homomeric 10-nm filaments.</text>
</comment>
<comment type="similarity">
    <text evidence="5">Belongs to the intermediate filament family.</text>
</comment>
<name>NFL_PIG</name>
<dbReference type="PIR" id="A91337">
    <property type="entry name" value="QFPGL"/>
</dbReference>
<dbReference type="SMR" id="P02547"/>
<dbReference type="FunCoup" id="P02547">
    <property type="interactions" value="182"/>
</dbReference>
<dbReference type="STRING" id="9823.ENSSSCP00000058100"/>
<dbReference type="GlyCosmos" id="P02547">
    <property type="glycosylation" value="2 sites, No reported glycans"/>
</dbReference>
<dbReference type="GlyGen" id="P02547">
    <property type="glycosylation" value="2 sites"/>
</dbReference>
<dbReference type="iPTMnet" id="P02547"/>
<dbReference type="PaxDb" id="9823-ENSSSCP00000010302"/>
<dbReference type="PeptideAtlas" id="P02547"/>
<dbReference type="eggNOG" id="ENOG502QSXY">
    <property type="taxonomic scope" value="Eukaryota"/>
</dbReference>
<dbReference type="InParanoid" id="P02547"/>
<dbReference type="Proteomes" id="UP000008227">
    <property type="component" value="Unplaced"/>
</dbReference>
<dbReference type="Proteomes" id="UP000314985">
    <property type="component" value="Unplaced"/>
</dbReference>
<dbReference type="Proteomes" id="UP000694570">
    <property type="component" value="Unplaced"/>
</dbReference>
<dbReference type="Proteomes" id="UP000694571">
    <property type="component" value="Unplaced"/>
</dbReference>
<dbReference type="Proteomes" id="UP000694720">
    <property type="component" value="Unplaced"/>
</dbReference>
<dbReference type="Proteomes" id="UP000694722">
    <property type="component" value="Unplaced"/>
</dbReference>
<dbReference type="Proteomes" id="UP000694723">
    <property type="component" value="Unplaced"/>
</dbReference>
<dbReference type="Proteomes" id="UP000694724">
    <property type="component" value="Unplaced"/>
</dbReference>
<dbReference type="Proteomes" id="UP000694725">
    <property type="component" value="Unplaced"/>
</dbReference>
<dbReference type="Proteomes" id="UP000694726">
    <property type="component" value="Unplaced"/>
</dbReference>
<dbReference type="Proteomes" id="UP000694727">
    <property type="component" value="Unplaced"/>
</dbReference>
<dbReference type="Proteomes" id="UP000694728">
    <property type="component" value="Unplaced"/>
</dbReference>
<dbReference type="GO" id="GO:0030424">
    <property type="term" value="C:axon"/>
    <property type="evidence" value="ECO:0000250"/>
    <property type="project" value="UniProtKB"/>
</dbReference>
<dbReference type="GO" id="GO:1904115">
    <property type="term" value="C:axon cytoplasm"/>
    <property type="evidence" value="ECO:0007669"/>
    <property type="project" value="GOC"/>
</dbReference>
<dbReference type="GO" id="GO:0005882">
    <property type="term" value="C:intermediate filament"/>
    <property type="evidence" value="ECO:0000318"/>
    <property type="project" value="GO_Central"/>
</dbReference>
<dbReference type="GO" id="GO:0005883">
    <property type="term" value="C:neurofilament"/>
    <property type="evidence" value="ECO:0000314"/>
    <property type="project" value="CAFA"/>
</dbReference>
<dbReference type="GO" id="GO:0099160">
    <property type="term" value="C:postsynaptic intermediate filament cytoskeleton"/>
    <property type="evidence" value="ECO:0000318"/>
    <property type="project" value="GO_Central"/>
</dbReference>
<dbReference type="GO" id="GO:0042802">
    <property type="term" value="F:identical protein binding"/>
    <property type="evidence" value="ECO:0000250"/>
    <property type="project" value="UniProtKB"/>
</dbReference>
<dbReference type="GO" id="GO:0005200">
    <property type="term" value="F:structural constituent of cytoskeleton"/>
    <property type="evidence" value="ECO:0000250"/>
    <property type="project" value="UniProtKB"/>
</dbReference>
<dbReference type="GO" id="GO:0099184">
    <property type="term" value="F:structural constituent of postsynaptic intermediate filament cytoskeleton"/>
    <property type="evidence" value="ECO:0000318"/>
    <property type="project" value="GO_Central"/>
</dbReference>
<dbReference type="GO" id="GO:0008089">
    <property type="term" value="P:anterograde axonal transport"/>
    <property type="evidence" value="ECO:0000250"/>
    <property type="project" value="UniProtKB"/>
</dbReference>
<dbReference type="GO" id="GO:0019896">
    <property type="term" value="P:axonal transport of mitochondrion"/>
    <property type="evidence" value="ECO:0000250"/>
    <property type="project" value="UniProtKB"/>
</dbReference>
<dbReference type="GO" id="GO:0045109">
    <property type="term" value="P:intermediate filament organization"/>
    <property type="evidence" value="ECO:0000250"/>
    <property type="project" value="UniProtKB"/>
</dbReference>
<dbReference type="GO" id="GO:0033693">
    <property type="term" value="P:neurofilament bundle assembly"/>
    <property type="evidence" value="ECO:0000250"/>
    <property type="project" value="UniProtKB"/>
</dbReference>
<dbReference type="GO" id="GO:0008090">
    <property type="term" value="P:retrograde axonal transport"/>
    <property type="evidence" value="ECO:0000250"/>
    <property type="project" value="UniProtKB"/>
</dbReference>
<dbReference type="DisProt" id="DP00151"/>
<dbReference type="FunFam" id="1.20.5.1160:FF:000001">
    <property type="entry name" value="Keratin type II"/>
    <property type="match status" value="1"/>
</dbReference>
<dbReference type="FunFam" id="1.20.5.170:FF:000002">
    <property type="entry name" value="Type I keratin KA11"/>
    <property type="match status" value="1"/>
</dbReference>
<dbReference type="FunFam" id="1.20.5.500:FF:000001">
    <property type="entry name" value="Type II keratin 23"/>
    <property type="match status" value="1"/>
</dbReference>
<dbReference type="Gene3D" id="1.20.5.170">
    <property type="match status" value="1"/>
</dbReference>
<dbReference type="Gene3D" id="1.20.5.500">
    <property type="entry name" value="Single helix bin"/>
    <property type="match status" value="1"/>
</dbReference>
<dbReference type="Gene3D" id="1.20.5.1160">
    <property type="entry name" value="Vasodilator-stimulated phosphoprotein"/>
    <property type="match status" value="1"/>
</dbReference>
<dbReference type="InterPro" id="IPR018039">
    <property type="entry name" value="IF_conserved"/>
</dbReference>
<dbReference type="InterPro" id="IPR039008">
    <property type="entry name" value="IF_rod_dom"/>
</dbReference>
<dbReference type="InterPro" id="IPR006821">
    <property type="entry name" value="Intermed_filament_DNA-bd"/>
</dbReference>
<dbReference type="InterPro" id="IPR050405">
    <property type="entry name" value="Intermediate_filament"/>
</dbReference>
<dbReference type="PANTHER" id="PTHR45652">
    <property type="entry name" value="GLIAL FIBRILLARY ACIDIC PROTEIN"/>
    <property type="match status" value="1"/>
</dbReference>
<dbReference type="PANTHER" id="PTHR45652:SF8">
    <property type="entry name" value="NEUROFILAMENT LIGHT POLYPEPTIDE"/>
    <property type="match status" value="1"/>
</dbReference>
<dbReference type="Pfam" id="PF00038">
    <property type="entry name" value="Filament"/>
    <property type="match status" value="1"/>
</dbReference>
<dbReference type="Pfam" id="PF04732">
    <property type="entry name" value="Filament_head"/>
    <property type="match status" value="1"/>
</dbReference>
<dbReference type="SMART" id="SM01391">
    <property type="entry name" value="Filament"/>
    <property type="match status" value="1"/>
</dbReference>
<dbReference type="SUPFAM" id="SSF64593">
    <property type="entry name" value="Intermediate filament protein, coiled coil region"/>
    <property type="match status" value="2"/>
</dbReference>
<dbReference type="PROSITE" id="PS00226">
    <property type="entry name" value="IF_ROD_1"/>
    <property type="match status" value="1"/>
</dbReference>
<dbReference type="PROSITE" id="PS51842">
    <property type="entry name" value="IF_ROD_2"/>
    <property type="match status" value="1"/>
</dbReference>